<evidence type="ECO:0000250" key="1">
    <source>
        <dbReference type="UniProtKB" id="P51681"/>
    </source>
</evidence>
<evidence type="ECO:0000250" key="2">
    <source>
        <dbReference type="UniProtKB" id="Q9XT76"/>
    </source>
</evidence>
<evidence type="ECO:0000255" key="3"/>
<evidence type="ECO:0000255" key="4">
    <source>
        <dbReference type="PROSITE-ProRule" id="PRU00521"/>
    </source>
</evidence>
<feature type="chain" id="PRO_0000254904" description="C-C chemokine receptor type 5">
    <location>
        <begin position="1"/>
        <end position="352"/>
    </location>
</feature>
<feature type="topological domain" description="Extracellular" evidence="3">
    <location>
        <begin position="1"/>
        <end position="30"/>
    </location>
</feature>
<feature type="transmembrane region" description="Helical; Name=1" evidence="3">
    <location>
        <begin position="31"/>
        <end position="58"/>
    </location>
</feature>
<feature type="topological domain" description="Cytoplasmic" evidence="3">
    <location>
        <begin position="59"/>
        <end position="68"/>
    </location>
</feature>
<feature type="transmembrane region" description="Helical; Name=2" evidence="3">
    <location>
        <begin position="69"/>
        <end position="89"/>
    </location>
</feature>
<feature type="topological domain" description="Extracellular" evidence="3">
    <location>
        <begin position="90"/>
        <end position="102"/>
    </location>
</feature>
<feature type="transmembrane region" description="Helical; Name=3" evidence="3">
    <location>
        <begin position="103"/>
        <end position="124"/>
    </location>
</feature>
<feature type="topological domain" description="Cytoplasmic" evidence="3">
    <location>
        <begin position="125"/>
        <end position="141"/>
    </location>
</feature>
<feature type="transmembrane region" description="Helical; Name=4" evidence="3">
    <location>
        <begin position="142"/>
        <end position="166"/>
    </location>
</feature>
<feature type="topological domain" description="Extracellular" evidence="3">
    <location>
        <begin position="167"/>
        <end position="198"/>
    </location>
</feature>
<feature type="transmembrane region" description="Helical; Name=5" evidence="3">
    <location>
        <begin position="199"/>
        <end position="218"/>
    </location>
</feature>
<feature type="topological domain" description="Cytoplasmic" evidence="3">
    <location>
        <begin position="219"/>
        <end position="235"/>
    </location>
</feature>
<feature type="transmembrane region" description="Helical; Name=6" evidence="3">
    <location>
        <begin position="236"/>
        <end position="260"/>
    </location>
</feature>
<feature type="topological domain" description="Extracellular" evidence="3">
    <location>
        <begin position="261"/>
        <end position="277"/>
    </location>
</feature>
<feature type="transmembrane region" description="Helical; Name=7" evidence="3">
    <location>
        <begin position="278"/>
        <end position="301"/>
    </location>
</feature>
<feature type="topological domain" description="Cytoplasmic" evidence="3">
    <location>
        <begin position="302"/>
        <end position="352"/>
    </location>
</feature>
<feature type="modified residue" description="Sulfotyrosine" evidence="1">
    <location>
        <position position="3"/>
    </location>
</feature>
<feature type="modified residue" description="Sulfotyrosine" evidence="3">
    <location>
        <position position="10"/>
    </location>
</feature>
<feature type="modified residue" description="Sulfotyrosine" evidence="3">
    <location>
        <position position="14"/>
    </location>
</feature>
<feature type="modified residue" description="Sulfotyrosine" evidence="3">
    <location>
        <position position="15"/>
    </location>
</feature>
<feature type="modified residue" description="Phosphoserine; by BARK1" evidence="1">
    <location>
        <position position="336"/>
    </location>
</feature>
<feature type="modified residue" description="Phosphoserine; by BARK1" evidence="1">
    <location>
        <position position="337"/>
    </location>
</feature>
<feature type="modified residue" description="Phosphoserine; by BARK1" evidence="1">
    <location>
        <position position="342"/>
    </location>
</feature>
<feature type="modified residue" description="Phosphoserine; by BARK1" evidence="1">
    <location>
        <position position="349"/>
    </location>
</feature>
<feature type="lipid moiety-binding region" description="S-palmitoyl cysteine" evidence="1">
    <location>
        <position position="321"/>
    </location>
</feature>
<feature type="lipid moiety-binding region" description="S-palmitoyl cysteine" evidence="1">
    <location>
        <position position="323"/>
    </location>
</feature>
<feature type="lipid moiety-binding region" description="S-palmitoyl cysteine" evidence="1">
    <location>
        <position position="324"/>
    </location>
</feature>
<feature type="glycosylation site" description="O-linked (GalNAc...) serine" evidence="1">
    <location>
        <position position="6"/>
    </location>
</feature>
<feature type="glycosylation site" description="O-linked (GalNAc...) serine" evidence="1">
    <location>
        <position position="7"/>
    </location>
</feature>
<feature type="disulfide bond" evidence="1">
    <location>
        <begin position="20"/>
        <end position="269"/>
    </location>
</feature>
<feature type="disulfide bond" evidence="4">
    <location>
        <begin position="101"/>
        <end position="178"/>
    </location>
</feature>
<comment type="function">
    <text evidence="1">Receptor for a number of inflammatory CC-chemokines including CCL3/MIP-1-alpha, CCL4/MIP-1-beta and RANTES and subsequently transduces a signal by increasing the intracellular calcium ion level. May play a role in the control of granulocytic lineage proliferation or differentiation. Participates in T-lymphocyte migration to the infection site by acting as a chemotactic receptor.</text>
</comment>
<comment type="subunit">
    <text evidence="1">Interacts with PRAF2. Efficient ligand binding to CCL3/MIP-1alpha and CCL4/MIP-1beta requires sulfation, O-glycosylation and sialic acid modifications. Glycosylation on Ser-6 is required for efficient binding of CCL4. Interacts with GRK2. Interacts with ARRB1 and ARRB2. Interacts with CNIH4. Interacts with S100A4; this interaction stimulates T-lymphocyte chemotaxis.</text>
</comment>
<comment type="subcellular location">
    <subcellularLocation>
        <location evidence="2">Cell membrane</location>
        <topology evidence="2">Multi-pass membrane protein</topology>
    </subcellularLocation>
</comment>
<comment type="PTM">
    <text evidence="1">Sulfated on at least 2 of the N-terminal tyrosines. Sulfation is required for efficient binding of the chemokines, CCL3 and CCL4 (By similarity).</text>
</comment>
<comment type="PTM">
    <text evidence="1">Palmitoylation in the C-terminal is important for cell surface expression.</text>
</comment>
<comment type="PTM">
    <text evidence="1">Phosphorylation on serine residues in the C-terminal is stimulated by binding CC chemokines especially by APO-RANTES.</text>
</comment>
<comment type="PTM">
    <text evidence="1">O-glycosylated, but not N-glycosylated. Ser-6 appears to be the major site even if Ser-7 may be also O-glycosylated. Also sialylated glycans present which contribute to chemokine binding. Thr-16 and Ser-17 may also be glycosylated and, if so, with small moieties such as a T-antigen.</text>
</comment>
<comment type="similarity">
    <text evidence="4">Belongs to the G-protein coupled receptor 1 family.</text>
</comment>
<dbReference type="EMBL" id="AF081577">
    <property type="protein sequence ID" value="AAD45495.1"/>
    <property type="molecule type" value="Genomic_DNA"/>
</dbReference>
<dbReference type="SMR" id="Q95NE8"/>
<dbReference type="GlyCosmos" id="Q95NE8">
    <property type="glycosylation" value="2 sites, No reported glycans"/>
</dbReference>
<dbReference type="GO" id="GO:0005737">
    <property type="term" value="C:cytoplasm"/>
    <property type="evidence" value="ECO:0007669"/>
    <property type="project" value="TreeGrafter"/>
</dbReference>
<dbReference type="GO" id="GO:0009897">
    <property type="term" value="C:external side of plasma membrane"/>
    <property type="evidence" value="ECO:0000250"/>
    <property type="project" value="UniProtKB"/>
</dbReference>
<dbReference type="GO" id="GO:0016493">
    <property type="term" value="F:C-C chemokine receptor activity"/>
    <property type="evidence" value="ECO:0000250"/>
    <property type="project" value="UniProtKB"/>
</dbReference>
<dbReference type="GO" id="GO:0071791">
    <property type="term" value="F:chemokine (C-C motif) ligand 5 binding"/>
    <property type="evidence" value="ECO:0007669"/>
    <property type="project" value="TreeGrafter"/>
</dbReference>
<dbReference type="GO" id="GO:0019722">
    <property type="term" value="P:calcium-mediated signaling"/>
    <property type="evidence" value="ECO:0007669"/>
    <property type="project" value="TreeGrafter"/>
</dbReference>
<dbReference type="GO" id="GO:0060326">
    <property type="term" value="P:cell chemotaxis"/>
    <property type="evidence" value="ECO:0007669"/>
    <property type="project" value="TreeGrafter"/>
</dbReference>
<dbReference type="GO" id="GO:0006955">
    <property type="term" value="P:immune response"/>
    <property type="evidence" value="ECO:0007669"/>
    <property type="project" value="InterPro"/>
</dbReference>
<dbReference type="GO" id="GO:0006954">
    <property type="term" value="P:inflammatory response"/>
    <property type="evidence" value="ECO:0007669"/>
    <property type="project" value="InterPro"/>
</dbReference>
<dbReference type="GO" id="GO:0007204">
    <property type="term" value="P:positive regulation of cytosolic calcium ion concentration"/>
    <property type="evidence" value="ECO:0007669"/>
    <property type="project" value="TreeGrafter"/>
</dbReference>
<dbReference type="CDD" id="cd15184">
    <property type="entry name" value="7tmA_CCR5_CCR2"/>
    <property type="match status" value="1"/>
</dbReference>
<dbReference type="FunFam" id="1.20.1070.10:FF:000026">
    <property type="entry name" value="C-C chemokine receptor type 5"/>
    <property type="match status" value="1"/>
</dbReference>
<dbReference type="Gene3D" id="1.20.1070.10">
    <property type="entry name" value="Rhodopsin 7-helix transmembrane proteins"/>
    <property type="match status" value="1"/>
</dbReference>
<dbReference type="InterPro" id="IPR050119">
    <property type="entry name" value="CCR1-9-like"/>
</dbReference>
<dbReference type="InterPro" id="IPR002240">
    <property type="entry name" value="Chemokine_CCR5"/>
</dbReference>
<dbReference type="InterPro" id="IPR000355">
    <property type="entry name" value="Chemokine_rcpt"/>
</dbReference>
<dbReference type="InterPro" id="IPR000276">
    <property type="entry name" value="GPCR_Rhodpsn"/>
</dbReference>
<dbReference type="InterPro" id="IPR017452">
    <property type="entry name" value="GPCR_Rhodpsn_7TM"/>
</dbReference>
<dbReference type="PANTHER" id="PTHR10489:SF686">
    <property type="entry name" value="C-C CHEMOKINE RECEPTOR TYPE 5"/>
    <property type="match status" value="1"/>
</dbReference>
<dbReference type="PANTHER" id="PTHR10489">
    <property type="entry name" value="CELL ADHESION MOLECULE"/>
    <property type="match status" value="1"/>
</dbReference>
<dbReference type="Pfam" id="PF00001">
    <property type="entry name" value="7tm_1"/>
    <property type="match status" value="1"/>
</dbReference>
<dbReference type="PRINTS" id="PR00657">
    <property type="entry name" value="CCCHEMOKINER"/>
</dbReference>
<dbReference type="PRINTS" id="PR01110">
    <property type="entry name" value="CHEMOKINER5"/>
</dbReference>
<dbReference type="PRINTS" id="PR00237">
    <property type="entry name" value="GPCRRHODOPSN"/>
</dbReference>
<dbReference type="SUPFAM" id="SSF81321">
    <property type="entry name" value="Family A G protein-coupled receptor-like"/>
    <property type="match status" value="1"/>
</dbReference>
<dbReference type="PROSITE" id="PS00237">
    <property type="entry name" value="G_PROTEIN_RECEP_F1_1"/>
    <property type="match status" value="1"/>
</dbReference>
<dbReference type="PROSITE" id="PS50262">
    <property type="entry name" value="G_PROTEIN_RECEP_F1_2"/>
    <property type="match status" value="1"/>
</dbReference>
<protein>
    <recommendedName>
        <fullName>C-C chemokine receptor type 5</fullName>
        <shortName>C-C CKR-5</shortName>
        <shortName>CC-CKR-5</shortName>
        <shortName>CCR-5</shortName>
        <shortName>CCR5</shortName>
    </recommendedName>
    <cdAntigenName>CD195</cdAntigenName>
</protein>
<sequence>MDYQVSSPTYDIDYYTSEPCQKINVKQIAARLLPPLYSLVFIFGFVGNILVVLILINCKRLKSMTDIYLLNLAISDLLFLLTVPFWAHYAAAQWDFGNTMCQLLTGLYFIGFFSGIFFIILLTIDRYLAIVHAVFALKARTVTFGVVTSVITWVVAVFASLPRIIFTRSQREGLHYTCSSHFPYSQYQFWKNFQTLKIVILGLVLPLLVMVICYSGILKTLLRCRNEKKRHRAVRLIFTIMIVYFLFWAPYNIVLLLNTFQEFFGLNNCSSSNRLDQAMQVTETLGMTHCCINPIIYAFVGEKFRNYLLVFFQKHIAKRFCKCCSIFQQEAPERASSVYTRSTGEQETSVGL</sequence>
<proteinExistence type="inferred from homology"/>
<accession>Q95NE8</accession>
<name>CCR5_CHLTN</name>
<reference key="1">
    <citation type="journal article" date="1999" name="AIDS Res. Hum. Retroviruses">
        <title>Mutations in CCR5-coding sequences are not associated with SIV carrier status in African nonhuman primates.</title>
        <authorList>
            <person name="Mueller-Trutwin M.-C."/>
            <person name="Corbet S."/>
            <person name="Hansen J."/>
            <person name="Georges-Courbot M.-C."/>
            <person name="Diop O."/>
            <person name="Rigoulet J."/>
            <person name="Barre-Sinoussi F."/>
            <person name="Fomsgaard A."/>
        </authorList>
    </citation>
    <scope>NUCLEOTIDE SEQUENCE [GENOMIC DNA]</scope>
</reference>
<keyword id="KW-1003">Cell membrane</keyword>
<keyword id="KW-1015">Disulfide bond</keyword>
<keyword id="KW-0297">G-protein coupled receptor</keyword>
<keyword id="KW-0325">Glycoprotein</keyword>
<keyword id="KW-0449">Lipoprotein</keyword>
<keyword id="KW-0472">Membrane</keyword>
<keyword id="KW-0564">Palmitate</keyword>
<keyword id="KW-0597">Phosphoprotein</keyword>
<keyword id="KW-0675">Receptor</keyword>
<keyword id="KW-0765">Sulfation</keyword>
<keyword id="KW-0807">Transducer</keyword>
<keyword id="KW-0812">Transmembrane</keyword>
<keyword id="KW-1133">Transmembrane helix</keyword>
<organism>
    <name type="scientific">Chlorocebus tantalus</name>
    <name type="common">Tantalus monkey</name>
    <name type="synonym">Cercopithecus tantalus</name>
    <dbReference type="NCBI Taxonomy" id="60712"/>
    <lineage>
        <taxon>Eukaryota</taxon>
        <taxon>Metazoa</taxon>
        <taxon>Chordata</taxon>
        <taxon>Craniata</taxon>
        <taxon>Vertebrata</taxon>
        <taxon>Euteleostomi</taxon>
        <taxon>Mammalia</taxon>
        <taxon>Eutheria</taxon>
        <taxon>Euarchontoglires</taxon>
        <taxon>Primates</taxon>
        <taxon>Haplorrhini</taxon>
        <taxon>Catarrhini</taxon>
        <taxon>Cercopithecidae</taxon>
        <taxon>Cercopithecinae</taxon>
        <taxon>Chlorocebus</taxon>
    </lineage>
</organism>
<gene>
    <name type="primary">CCR5</name>
    <name type="synonym">CMKBR5</name>
</gene>